<proteinExistence type="evidence at protein level"/>
<gene>
    <name evidence="5" type="primary">GIP2</name>
    <name evidence="6" type="ORF">Niben101Scf03191g04002</name>
</gene>
<accession>P0DO21</accession>
<protein>
    <recommendedName>
        <fullName evidence="6">Probable aspartic proteinase GIP2</fullName>
        <ecNumber evidence="6">3.4.23.-</ecNumber>
    </recommendedName>
    <alternativeName>
        <fullName evidence="5">Glucanase inhibitor protein 2</fullName>
        <shortName evidence="5">NbGIP2</shortName>
    </alternativeName>
</protein>
<organism>
    <name type="scientific">Nicotiana benthamiana</name>
    <dbReference type="NCBI Taxonomy" id="4100"/>
    <lineage>
        <taxon>Eukaryota</taxon>
        <taxon>Viridiplantae</taxon>
        <taxon>Streptophyta</taxon>
        <taxon>Embryophyta</taxon>
        <taxon>Tracheophyta</taxon>
        <taxon>Spermatophyta</taxon>
        <taxon>Magnoliopsida</taxon>
        <taxon>eudicotyledons</taxon>
        <taxon>Gunneridae</taxon>
        <taxon>Pentapetalae</taxon>
        <taxon>asterids</taxon>
        <taxon>lamiids</taxon>
        <taxon>Solanales</taxon>
        <taxon>Solanaceae</taxon>
        <taxon>Nicotianoideae</taxon>
        <taxon>Nicotianeae</taxon>
        <taxon>Nicotiana</taxon>
    </lineage>
</organism>
<comment type="function">
    <text evidence="4">Involved in plant defense against Phytophtora parasitica (PubMed:28082413). Contributes positively to Nicotiana resistance against P.parasitica (PubMed:28082413). Binds the P.parasitica xyloglucanase XEG1 and inhibits its cell wall degrading enzyme activity and its contribution as P.parasitica virulence factor (PubMed:28082413). XEG1 acts as an important virulence factor during P.parasitica infection but also acts as a pathogen-associated molecular pattern (PAMP) in Nictotiana species, where it can trigger defense responses including cell death (PubMed:28082413).</text>
</comment>
<comment type="function">
    <text evidence="4">(Microbial infection) Possesses stronger binding affinity with XLP1, a truncated paralog of P.parasitica XEG1 which has no enzyme activity. Is impaired in its inhibitor activity towards the P.parasitica xyloglucanase XEG1 when hijacked by XLP1 binding.</text>
</comment>
<comment type="subunit">
    <text evidence="4">Interacts with the Phytophtora parasitica xyloglucanase XEG1 and xyloglucanase-like XLP1 (PubMed:28082413). Possesses stronger binding affinity with XLP1, a truncated paralog of P.parasitica XEG1 which has no enzyme activity (PubMed:28082413).</text>
</comment>
<comment type="subcellular location">
    <subcellularLocation>
        <location evidence="7">Secreted</location>
        <location evidence="7">Extracellular space</location>
        <location evidence="7">Apoplast</location>
    </subcellularLocation>
</comment>
<comment type="similarity">
    <text evidence="3 6">Belongs to the peptidase A1 family.</text>
</comment>
<sequence length="439" mass="47214">MASSCCLHAILLCSLLFITSTTAQSETSFRPKGLILPITKDALTLQYLTQIQQRTPLVPVSLTLDLGGQFLWVDCDQGYVSSTYRPARCRSAQCSLAGAGSGCGQCFSPPKPGCNNNTCGLLPDNTITRTATSGELASDTVQVQSSNGKNPGRHVSDKDFLFVCGSTFLLEGLASGVKGMAGLGRTRISLPSQFSAEFSFPRKFAVCLSSSTNSKGVVLFGDGPYTFLPNREFANNDFSYTPLFINPVSTASAFSSREPSSEYFIGVKSIKINEKVVPINTTLLSIDNQGVGGTKISTVNPYTILETSIYNAVTNFFVKELVNITRVASVAPFRACFDSRNIASTRVGPAVPSIDLVLQNENVFWRIFGANSMVQVSENVLCLGFVDGGVSPRTSIVVGGYTIEDNLLQFDLARSRLGFTSSILFRQTTCANFNFTSIA</sequence>
<dbReference type="EC" id="3.4.23.-" evidence="6"/>
<dbReference type="SMR" id="P0DO21"/>
<dbReference type="GlyCosmos" id="P0DO21">
    <property type="glycosylation" value="4 sites, No reported glycans"/>
</dbReference>
<dbReference type="GO" id="GO:0048046">
    <property type="term" value="C:apoplast"/>
    <property type="evidence" value="ECO:0007669"/>
    <property type="project" value="UniProtKB-SubCell"/>
</dbReference>
<dbReference type="GO" id="GO:0004190">
    <property type="term" value="F:aspartic-type endopeptidase activity"/>
    <property type="evidence" value="ECO:0007669"/>
    <property type="project" value="UniProtKB-KW"/>
</dbReference>
<dbReference type="GO" id="GO:0006952">
    <property type="term" value="P:defense response"/>
    <property type="evidence" value="ECO:0007669"/>
    <property type="project" value="UniProtKB-KW"/>
</dbReference>
<dbReference type="GO" id="GO:0006508">
    <property type="term" value="P:proteolysis"/>
    <property type="evidence" value="ECO:0007669"/>
    <property type="project" value="UniProtKB-KW"/>
</dbReference>
<dbReference type="CDD" id="cd05489">
    <property type="entry name" value="xylanase_inhibitor_I_like"/>
    <property type="match status" value="1"/>
</dbReference>
<dbReference type="FunFam" id="2.40.70.10:FF:000041">
    <property type="entry name" value="Basic 7S globulin"/>
    <property type="match status" value="1"/>
</dbReference>
<dbReference type="FunFam" id="2.40.70.10:FF:000045">
    <property type="entry name" value="Basic 7S globulin"/>
    <property type="match status" value="1"/>
</dbReference>
<dbReference type="Gene3D" id="2.40.70.10">
    <property type="entry name" value="Acid Proteases"/>
    <property type="match status" value="2"/>
</dbReference>
<dbReference type="InterPro" id="IPR001461">
    <property type="entry name" value="Aspartic_peptidase_A1"/>
</dbReference>
<dbReference type="InterPro" id="IPR033121">
    <property type="entry name" value="PEPTIDASE_A1"/>
</dbReference>
<dbReference type="InterPro" id="IPR021109">
    <property type="entry name" value="Peptidase_aspartic_dom_sf"/>
</dbReference>
<dbReference type="InterPro" id="IPR032799">
    <property type="entry name" value="TAXi_C"/>
</dbReference>
<dbReference type="InterPro" id="IPR032861">
    <property type="entry name" value="TAXi_N"/>
</dbReference>
<dbReference type="InterPro" id="IPR033868">
    <property type="entry name" value="Xylanase_inhibitor_I-like"/>
</dbReference>
<dbReference type="PANTHER" id="PTHR47965">
    <property type="entry name" value="ASPARTYL PROTEASE-RELATED"/>
    <property type="match status" value="1"/>
</dbReference>
<dbReference type="PANTHER" id="PTHR47965:SF22">
    <property type="entry name" value="EUKARYOTIC ASPARTYL PROTEASE FAMILY PROTEIN"/>
    <property type="match status" value="1"/>
</dbReference>
<dbReference type="Pfam" id="PF14541">
    <property type="entry name" value="TAXi_C"/>
    <property type="match status" value="1"/>
</dbReference>
<dbReference type="Pfam" id="PF14543">
    <property type="entry name" value="TAXi_N"/>
    <property type="match status" value="1"/>
</dbReference>
<dbReference type="SUPFAM" id="SSF50630">
    <property type="entry name" value="Acid proteases"/>
    <property type="match status" value="1"/>
</dbReference>
<dbReference type="PROSITE" id="PS51767">
    <property type="entry name" value="PEPTIDASE_A1"/>
    <property type="match status" value="1"/>
</dbReference>
<evidence type="ECO:0000255" key="1"/>
<evidence type="ECO:0000255" key="2">
    <source>
        <dbReference type="PROSITE-ProRule" id="PRU00498"/>
    </source>
</evidence>
<evidence type="ECO:0000255" key="3">
    <source>
        <dbReference type="PROSITE-ProRule" id="PRU01103"/>
    </source>
</evidence>
<evidence type="ECO:0000269" key="4">
    <source>
    </source>
</evidence>
<evidence type="ECO:0000303" key="5">
    <source>
    </source>
</evidence>
<evidence type="ECO:0000305" key="6"/>
<evidence type="ECO:0000305" key="7">
    <source>
    </source>
</evidence>
<name>GIP2_NICBE</name>
<reference key="1">
    <citation type="journal article" date="2017" name="Science">
        <title>A paralogous decoy protects Phytophthora sojae apoplastic effector PsXEG1 from a host inhibitor.</title>
        <authorList>
            <person name="Ma Z."/>
            <person name="Zhu L."/>
            <person name="Song T."/>
            <person name="Wang Y."/>
            <person name="Zhang Q."/>
            <person name="Xia Y."/>
            <person name="Qiu M."/>
            <person name="Lin Y."/>
            <person name="Li H."/>
            <person name="Kong L."/>
            <person name="Fang Y."/>
            <person name="Ye W."/>
            <person name="Wang Y."/>
            <person name="Dong S."/>
            <person name="Zheng X."/>
            <person name="Tyler B.M."/>
            <person name="Wang Y."/>
        </authorList>
    </citation>
    <scope>FUNCTION</scope>
    <scope>INTERACTION WITH PHYTOPHTORA PARASITICA XYLOGLUCANASE XEG1 AND XLP1</scope>
    <scope>SUBCELLULAR LOCATION</scope>
</reference>
<feature type="signal peptide" evidence="1">
    <location>
        <begin position="1"/>
        <end position="23"/>
    </location>
</feature>
<feature type="chain" id="PRO_0000447892" description="Probable aspartic proteinase GIP2">
    <location>
        <begin position="24"/>
        <end position="439"/>
    </location>
</feature>
<feature type="domain" description="Peptidase A1" evidence="3">
    <location>
        <begin position="47"/>
        <end position="420"/>
    </location>
</feature>
<feature type="glycosylation site" description="N-linked (GlcNAc...) asparagine" evidence="2">
    <location>
        <position position="116"/>
    </location>
</feature>
<feature type="glycosylation site" description="N-linked (GlcNAc...) asparagine" evidence="2">
    <location>
        <position position="280"/>
    </location>
</feature>
<feature type="glycosylation site" description="N-linked (GlcNAc...) asparagine" evidence="2">
    <location>
        <position position="323"/>
    </location>
</feature>
<feature type="glycosylation site" description="N-linked (GlcNAc...) asparagine" evidence="2">
    <location>
        <position position="434"/>
    </location>
</feature>
<keyword id="KW-0052">Apoplast</keyword>
<keyword id="KW-0064">Aspartyl protease</keyword>
<keyword id="KW-0325">Glycoprotein</keyword>
<keyword id="KW-0378">Hydrolase</keyword>
<keyword id="KW-0611">Plant defense</keyword>
<keyword id="KW-0645">Protease</keyword>
<keyword id="KW-0964">Secreted</keyword>
<keyword id="KW-0732">Signal</keyword>